<protein>
    <recommendedName>
        <fullName evidence="1">3-ketoacyl-CoA thiolase</fullName>
        <ecNumber evidence="1">2.3.1.16</ecNumber>
    </recommendedName>
    <alternativeName>
        <fullName evidence="1">ACSs</fullName>
    </alternativeName>
    <alternativeName>
        <fullName evidence="1">Acetyl-CoA acyltransferase</fullName>
    </alternativeName>
    <alternativeName>
        <fullName evidence="1">Acyl-CoA ligase</fullName>
    </alternativeName>
    <alternativeName>
        <fullName evidence="1">Beta-ketothiolase</fullName>
    </alternativeName>
    <alternativeName>
        <fullName evidence="1">Fatty acid oxidation complex subunit beta</fullName>
    </alternativeName>
</protein>
<evidence type="ECO:0000255" key="1">
    <source>
        <dbReference type="HAMAP-Rule" id="MF_01618"/>
    </source>
</evidence>
<keyword id="KW-0012">Acyltransferase</keyword>
<keyword id="KW-0963">Cytoplasm</keyword>
<keyword id="KW-0276">Fatty acid metabolism</keyword>
<keyword id="KW-0442">Lipid degradation</keyword>
<keyword id="KW-0443">Lipid metabolism</keyword>
<keyword id="KW-0808">Transferase</keyword>
<gene>
    <name evidence="1" type="primary">fadI</name>
    <name type="ordered locus">YpsIP31758_1399</name>
</gene>
<accession>A7FGK0</accession>
<reference key="1">
    <citation type="journal article" date="2007" name="PLoS Genet.">
        <title>The complete genome sequence of Yersinia pseudotuberculosis IP31758, the causative agent of Far East scarlet-like fever.</title>
        <authorList>
            <person name="Eppinger M."/>
            <person name="Rosovitz M.J."/>
            <person name="Fricke W.F."/>
            <person name="Rasko D.A."/>
            <person name="Kokorina G."/>
            <person name="Fayolle C."/>
            <person name="Lindler L.E."/>
            <person name="Carniel E."/>
            <person name="Ravel J."/>
        </authorList>
    </citation>
    <scope>NUCLEOTIDE SEQUENCE [LARGE SCALE GENOMIC DNA]</scope>
    <source>
        <strain>IP 31758</strain>
    </source>
</reference>
<name>FADI_YERP3</name>
<dbReference type="EC" id="2.3.1.16" evidence="1"/>
<dbReference type="EMBL" id="CP000720">
    <property type="protein sequence ID" value="ABS48547.1"/>
    <property type="molecule type" value="Genomic_DNA"/>
</dbReference>
<dbReference type="RefSeq" id="WP_002209704.1">
    <property type="nucleotide sequence ID" value="NC_009708.1"/>
</dbReference>
<dbReference type="SMR" id="A7FGK0"/>
<dbReference type="GeneID" id="57975943"/>
<dbReference type="KEGG" id="ypi:YpsIP31758_1399"/>
<dbReference type="HOGENOM" id="CLU_031026_2_0_6"/>
<dbReference type="UniPathway" id="UPA00659"/>
<dbReference type="Proteomes" id="UP000002412">
    <property type="component" value="Chromosome"/>
</dbReference>
<dbReference type="GO" id="GO:0005829">
    <property type="term" value="C:cytosol"/>
    <property type="evidence" value="ECO:0007669"/>
    <property type="project" value="TreeGrafter"/>
</dbReference>
<dbReference type="GO" id="GO:0003988">
    <property type="term" value="F:acetyl-CoA C-acyltransferase activity"/>
    <property type="evidence" value="ECO:0007669"/>
    <property type="project" value="UniProtKB-UniRule"/>
</dbReference>
<dbReference type="GO" id="GO:0006635">
    <property type="term" value="P:fatty acid beta-oxidation"/>
    <property type="evidence" value="ECO:0007669"/>
    <property type="project" value="UniProtKB-UniRule"/>
</dbReference>
<dbReference type="CDD" id="cd00751">
    <property type="entry name" value="thiolase"/>
    <property type="match status" value="1"/>
</dbReference>
<dbReference type="FunFam" id="3.40.47.10:FF:000011">
    <property type="entry name" value="3-ketoacyl-CoA thiolase"/>
    <property type="match status" value="1"/>
</dbReference>
<dbReference type="Gene3D" id="3.40.47.10">
    <property type="match status" value="1"/>
</dbReference>
<dbReference type="HAMAP" id="MF_01618">
    <property type="entry name" value="FadI"/>
    <property type="match status" value="1"/>
</dbReference>
<dbReference type="InterPro" id="IPR012806">
    <property type="entry name" value="Ac-CoA_C-AcTrfase_FadI"/>
</dbReference>
<dbReference type="InterPro" id="IPR002155">
    <property type="entry name" value="Thiolase"/>
</dbReference>
<dbReference type="InterPro" id="IPR016039">
    <property type="entry name" value="Thiolase-like"/>
</dbReference>
<dbReference type="InterPro" id="IPR020615">
    <property type="entry name" value="Thiolase_acyl_enz_int_AS"/>
</dbReference>
<dbReference type="InterPro" id="IPR020610">
    <property type="entry name" value="Thiolase_AS"/>
</dbReference>
<dbReference type="InterPro" id="IPR020617">
    <property type="entry name" value="Thiolase_C"/>
</dbReference>
<dbReference type="InterPro" id="IPR020613">
    <property type="entry name" value="Thiolase_CS"/>
</dbReference>
<dbReference type="InterPro" id="IPR020616">
    <property type="entry name" value="Thiolase_N"/>
</dbReference>
<dbReference type="NCBIfam" id="TIGR01930">
    <property type="entry name" value="AcCoA-C-Actrans"/>
    <property type="match status" value="1"/>
</dbReference>
<dbReference type="NCBIfam" id="TIGR02446">
    <property type="entry name" value="FadI"/>
    <property type="match status" value="1"/>
</dbReference>
<dbReference type="NCBIfam" id="NF006516">
    <property type="entry name" value="PRK08963.1"/>
    <property type="match status" value="1"/>
</dbReference>
<dbReference type="PANTHER" id="PTHR18919:SF107">
    <property type="entry name" value="ACETYL-COA ACETYLTRANSFERASE, CYTOSOLIC"/>
    <property type="match status" value="1"/>
</dbReference>
<dbReference type="PANTHER" id="PTHR18919">
    <property type="entry name" value="ACETYL-COA C-ACYLTRANSFERASE"/>
    <property type="match status" value="1"/>
</dbReference>
<dbReference type="Pfam" id="PF02803">
    <property type="entry name" value="Thiolase_C"/>
    <property type="match status" value="1"/>
</dbReference>
<dbReference type="Pfam" id="PF00108">
    <property type="entry name" value="Thiolase_N"/>
    <property type="match status" value="1"/>
</dbReference>
<dbReference type="PIRSF" id="PIRSF000429">
    <property type="entry name" value="Ac-CoA_Ac_transf"/>
    <property type="match status" value="1"/>
</dbReference>
<dbReference type="SUPFAM" id="SSF53901">
    <property type="entry name" value="Thiolase-like"/>
    <property type="match status" value="2"/>
</dbReference>
<dbReference type="PROSITE" id="PS00098">
    <property type="entry name" value="THIOLASE_1"/>
    <property type="match status" value="1"/>
</dbReference>
<dbReference type="PROSITE" id="PS00737">
    <property type="entry name" value="THIOLASE_2"/>
    <property type="match status" value="1"/>
</dbReference>
<dbReference type="PROSITE" id="PS00099">
    <property type="entry name" value="THIOLASE_3"/>
    <property type="match status" value="1"/>
</dbReference>
<proteinExistence type="inferred from homology"/>
<comment type="function">
    <text evidence="1">Catalyzes the final step of fatty acid oxidation in which acetyl-CoA is released and the CoA ester of a fatty acid two carbons shorter is formed.</text>
</comment>
<comment type="catalytic activity">
    <reaction evidence="1">
        <text>an acyl-CoA + acetyl-CoA = a 3-oxoacyl-CoA + CoA</text>
        <dbReference type="Rhea" id="RHEA:21564"/>
        <dbReference type="ChEBI" id="CHEBI:57287"/>
        <dbReference type="ChEBI" id="CHEBI:57288"/>
        <dbReference type="ChEBI" id="CHEBI:58342"/>
        <dbReference type="ChEBI" id="CHEBI:90726"/>
        <dbReference type="EC" id="2.3.1.16"/>
    </reaction>
</comment>
<comment type="pathway">
    <text evidence="1">Lipid metabolism; fatty acid beta-oxidation.</text>
</comment>
<comment type="subunit">
    <text evidence="1">Heterotetramer of two alpha chains (FadJ) and two beta chains (FadI).</text>
</comment>
<comment type="subcellular location">
    <subcellularLocation>
        <location evidence="1">Cytoplasm</location>
    </subcellularLocation>
</comment>
<comment type="similarity">
    <text evidence="1">Belongs to the thiolase-like superfamily. Thiolase family.</text>
</comment>
<organism>
    <name type="scientific">Yersinia pseudotuberculosis serotype O:1b (strain IP 31758)</name>
    <dbReference type="NCBI Taxonomy" id="349747"/>
    <lineage>
        <taxon>Bacteria</taxon>
        <taxon>Pseudomonadati</taxon>
        <taxon>Pseudomonadota</taxon>
        <taxon>Gammaproteobacteria</taxon>
        <taxon>Enterobacterales</taxon>
        <taxon>Yersiniaceae</taxon>
        <taxon>Yersinia</taxon>
    </lineage>
</organism>
<sequence length="436" mass="46311">MSKPLPLVTRQGDRIVIVNGLRTPFAKQATAYHGVPAVDLGKIVVSELLARSGISSELIDQLVFGQVVQMPEAPNIAREIVLGTGMSVHTDAYSVSRACATSFQAVANVAESIIAGSVDIAIAGGADSSSVLPIGVSKALARTLVDANKARSLSQKLKLFSRLRLRDLLPVAPAVAEYSTGLRMGDTAEQMAKTYGISREDQDALALRSHQLAAEAWQQGWLHDEVMTAYIPPYREAIIEDNNIRKDSTLAQYAKLRPAFDRQHGSVTAANSTPLTDGAAAVLMMSESKAKALGLPPLGYLRSFAFSAIDVWQDMLLGPSYATPLALDRAGITLADLTLIDMHEAFAAQTLANLKMFASDTFAREKLGRSQAIGEVDMSKFNVLGGSIAYGHPFAATGARMITQTLNELRRRGGGLGLTTACAAGGLGAAMILEVE</sequence>
<feature type="chain" id="PRO_1000069522" description="3-ketoacyl-CoA thiolase">
    <location>
        <begin position="1"/>
        <end position="436"/>
    </location>
</feature>
<feature type="active site" description="Acyl-thioester intermediate" evidence="1">
    <location>
        <position position="99"/>
    </location>
</feature>
<feature type="active site" description="Proton acceptor" evidence="1">
    <location>
        <position position="392"/>
    </location>
</feature>
<feature type="active site" description="Proton acceptor" evidence="1">
    <location>
        <position position="422"/>
    </location>
</feature>